<sequence length="154" mass="17900">YCYICHSLKYDRWYSNRNSLCCVFLICVLTLVAIVPNLCMGTLQYDPRIYSCTFAQSVSSAYTIAVVVFHFLVPMVIVIFRYLRIWVLVLQIRWRAKPENNPRLKPQDFRNFVTMFVVFVLFAICWAPLNFIGLAVASDPASMAPRIPEWLFVA</sequence>
<dbReference type="EMBL" id="U73326">
    <property type="protein sequence ID" value="AAC48726.1"/>
    <property type="molecule type" value="Genomic_DNA"/>
</dbReference>
<dbReference type="SMR" id="O02781"/>
<dbReference type="STRING" id="9823.ENSSSCP00000053039"/>
<dbReference type="BindingDB" id="O02781"/>
<dbReference type="InParanoid" id="O02781"/>
<dbReference type="Proteomes" id="UP000008227">
    <property type="component" value="Unplaced"/>
</dbReference>
<dbReference type="Proteomes" id="UP000314985">
    <property type="component" value="Unplaced"/>
</dbReference>
<dbReference type="Proteomes" id="UP000694570">
    <property type="component" value="Unplaced"/>
</dbReference>
<dbReference type="Proteomes" id="UP000694571">
    <property type="component" value="Unplaced"/>
</dbReference>
<dbReference type="Proteomes" id="UP000694720">
    <property type="component" value="Unplaced"/>
</dbReference>
<dbReference type="Proteomes" id="UP000694722">
    <property type="component" value="Unplaced"/>
</dbReference>
<dbReference type="Proteomes" id="UP000694723">
    <property type="component" value="Unplaced"/>
</dbReference>
<dbReference type="Proteomes" id="UP000694724">
    <property type="component" value="Unplaced"/>
</dbReference>
<dbReference type="Proteomes" id="UP000694725">
    <property type="component" value="Unplaced"/>
</dbReference>
<dbReference type="Proteomes" id="UP000694726">
    <property type="component" value="Unplaced"/>
</dbReference>
<dbReference type="Proteomes" id="UP000694727">
    <property type="component" value="Unplaced"/>
</dbReference>
<dbReference type="Proteomes" id="UP000694728">
    <property type="component" value="Unplaced"/>
</dbReference>
<dbReference type="GO" id="GO:0005886">
    <property type="term" value="C:plasma membrane"/>
    <property type="evidence" value="ECO:0000318"/>
    <property type="project" value="GO_Central"/>
</dbReference>
<dbReference type="GO" id="GO:0004930">
    <property type="term" value="F:G protein-coupled receptor activity"/>
    <property type="evidence" value="ECO:0000318"/>
    <property type="project" value="GO_Central"/>
</dbReference>
<dbReference type="GO" id="GO:0008502">
    <property type="term" value="F:melatonin receptor activity"/>
    <property type="evidence" value="ECO:0007669"/>
    <property type="project" value="InterPro"/>
</dbReference>
<dbReference type="GO" id="GO:0007186">
    <property type="term" value="P:G protein-coupled receptor signaling pathway"/>
    <property type="evidence" value="ECO:0000318"/>
    <property type="project" value="GO_Central"/>
</dbReference>
<dbReference type="FunFam" id="1.20.1070.10:FF:000557">
    <property type="entry name" value="Melatonin receptor type 1A"/>
    <property type="match status" value="1"/>
</dbReference>
<dbReference type="Gene3D" id="1.20.1070.10">
    <property type="entry name" value="Rhodopsin 7-helix transmembrane proteins"/>
    <property type="match status" value="1"/>
</dbReference>
<dbReference type="InterPro" id="IPR000276">
    <property type="entry name" value="GPCR_Rhodpsn"/>
</dbReference>
<dbReference type="InterPro" id="IPR017452">
    <property type="entry name" value="GPCR_Rhodpsn_7TM"/>
</dbReference>
<dbReference type="InterPro" id="IPR002278">
    <property type="entry name" value="Mel_1A/1B_rcpt"/>
</dbReference>
<dbReference type="InterPro" id="IPR000025">
    <property type="entry name" value="Melatonin_rcpt"/>
</dbReference>
<dbReference type="PANTHER" id="PTHR24228">
    <property type="entry name" value="B2 BRADYKININ RECEPTOR/ANGIOTENSIN II RECEPTOR"/>
    <property type="match status" value="1"/>
</dbReference>
<dbReference type="PANTHER" id="PTHR24228:SF53">
    <property type="entry name" value="MELATONIN RECEPTOR TYPE 1A"/>
    <property type="match status" value="1"/>
</dbReference>
<dbReference type="Pfam" id="PF00001">
    <property type="entry name" value="7tm_1"/>
    <property type="match status" value="1"/>
</dbReference>
<dbReference type="PRINTS" id="PR00237">
    <property type="entry name" value="GPCRRHODOPSN"/>
</dbReference>
<dbReference type="PRINTS" id="PR01149">
    <property type="entry name" value="MELATONIN1AR"/>
</dbReference>
<dbReference type="PRINTS" id="PR00857">
    <property type="entry name" value="MELATONINR"/>
</dbReference>
<dbReference type="SUPFAM" id="SSF81321">
    <property type="entry name" value="Family A G protein-coupled receptor-like"/>
    <property type="match status" value="1"/>
</dbReference>
<dbReference type="PROSITE" id="PS50262">
    <property type="entry name" value="G_PROTEIN_RECEP_F1_2"/>
    <property type="match status" value="1"/>
</dbReference>
<evidence type="ECO:0000255" key="1"/>
<evidence type="ECO:0000255" key="2">
    <source>
        <dbReference type="PROSITE-ProRule" id="PRU00521"/>
    </source>
</evidence>
<name>MTR1A_PIG</name>
<feature type="chain" id="PRO_0000069865" description="Melatonin receptor type 1A">
    <location>
        <begin position="1" status="less than"/>
        <end position="154" status="greater than"/>
    </location>
</feature>
<feature type="topological domain" description="Cytoplasmic" evidence="1">
    <location>
        <begin position="1" status="less than"/>
        <end position="19"/>
    </location>
</feature>
<feature type="transmembrane region" description="Helical; Name=4" evidence="1">
    <location>
        <begin position="20"/>
        <end position="40"/>
    </location>
</feature>
<feature type="topological domain" description="Extracellular" evidence="1">
    <location>
        <begin position="41"/>
        <end position="62"/>
    </location>
</feature>
<feature type="transmembrane region" description="Helical; Name=5" evidence="1">
    <location>
        <begin position="63"/>
        <end position="83"/>
    </location>
</feature>
<feature type="topological domain" description="Cytoplasmic" evidence="1">
    <location>
        <begin position="84"/>
        <end position="115"/>
    </location>
</feature>
<feature type="transmembrane region" description="Helical; Name=6" evidence="1">
    <location>
        <begin position="116"/>
        <end position="136"/>
    </location>
</feature>
<feature type="topological domain" description="Extracellular" evidence="1">
    <location>
        <begin position="137"/>
        <end position="149"/>
    </location>
</feature>
<feature type="non-terminal residue">
    <location>
        <position position="1"/>
    </location>
</feature>
<feature type="non-terminal residue">
    <location>
        <position position="154"/>
    </location>
</feature>
<reference key="1">
    <citation type="journal article" date="1997" name="Mamm. Genome">
        <title>Mapping of the melatonin receptor 1a (MTNR1A) gene in pigs, sheep, and cattle.</title>
        <authorList>
            <person name="Messer L.A."/>
            <person name="Wang L."/>
            <person name="Tuggle C.K."/>
            <person name="Yerle M."/>
            <person name="Chardon P."/>
            <person name="Pomp D."/>
            <person name="Womack J.E."/>
            <person name="Barendse W."/>
            <person name="Crawford A.M."/>
            <person name="Notter D.R."/>
            <person name="Rothschild M.F."/>
        </authorList>
    </citation>
    <scope>NUCLEOTIDE SEQUENCE [GENOMIC DNA]</scope>
    <source>
        <tissue>Hypothalamus</tissue>
        <tissue>Pituitary</tissue>
    </source>
</reference>
<accession>O02781</accession>
<protein>
    <recommendedName>
        <fullName>Melatonin receptor type 1A</fullName>
        <shortName>Mel-1A-R</shortName>
        <shortName>Mel1a receptor</shortName>
    </recommendedName>
</protein>
<gene>
    <name type="primary">MTNR1A</name>
</gene>
<organism>
    <name type="scientific">Sus scrofa</name>
    <name type="common">Pig</name>
    <dbReference type="NCBI Taxonomy" id="9823"/>
    <lineage>
        <taxon>Eukaryota</taxon>
        <taxon>Metazoa</taxon>
        <taxon>Chordata</taxon>
        <taxon>Craniata</taxon>
        <taxon>Vertebrata</taxon>
        <taxon>Euteleostomi</taxon>
        <taxon>Mammalia</taxon>
        <taxon>Eutheria</taxon>
        <taxon>Laurasiatheria</taxon>
        <taxon>Artiodactyla</taxon>
        <taxon>Suina</taxon>
        <taxon>Suidae</taxon>
        <taxon>Sus</taxon>
    </lineage>
</organism>
<proteinExistence type="inferred from homology"/>
<keyword id="KW-1003">Cell membrane</keyword>
<keyword id="KW-0297">G-protein coupled receptor</keyword>
<keyword id="KW-0472">Membrane</keyword>
<keyword id="KW-0675">Receptor</keyword>
<keyword id="KW-1185">Reference proteome</keyword>
<keyword id="KW-0807">Transducer</keyword>
<keyword id="KW-0812">Transmembrane</keyword>
<keyword id="KW-1133">Transmembrane helix</keyword>
<comment type="function">
    <text>High affinity receptor for melatonin. Likely to mediate the reproductive and circadian actions of melatonin. The activity of this receptor is mediated by pertussis toxin sensitive G proteins that inhibit adenylate cyclase activity.</text>
</comment>
<comment type="subcellular location">
    <subcellularLocation>
        <location>Cell membrane</location>
        <topology>Multi-pass membrane protein</topology>
    </subcellularLocation>
</comment>
<comment type="similarity">
    <text evidence="2">Belongs to the G-protein coupled receptor 1 family.</text>
</comment>